<sequence length="283" mass="31017">MATKLQDENTPCLAATPSEPRPTVLVFDSGVGGLSVYDEIRRLLPDLHYIYAFDNVAFPYGEKSETFIVERVVEIVTAVQQRYPLSLAVIACNTASTVSLPALREKFAFPVVGVVPAIKPAARLTANGVVGLLATRATVKRPYTHELIARFANECQIAMLGSAELVELAEAKLHGDSVSLEELRRILRPWLRMPEPPDTVVLGCTHFPLLRDELLQVLPEGTRLVDSGAAIARRTAWLLEHEAPDAKSTDANIAYCMAMTPGAEQLLPVLQRYGFETLEKLAV</sequence>
<name>MURI_SALPK</name>
<feature type="chain" id="PRO_1000114063" description="Glutamate racemase">
    <location>
        <begin position="1"/>
        <end position="283"/>
    </location>
</feature>
<feature type="active site" description="Proton donor/acceptor" evidence="1">
    <location>
        <position position="92"/>
    </location>
</feature>
<feature type="active site" description="Proton donor/acceptor" evidence="1">
    <location>
        <position position="204"/>
    </location>
</feature>
<feature type="binding site" evidence="1">
    <location>
        <begin position="28"/>
        <end position="29"/>
    </location>
    <ligand>
        <name>substrate</name>
    </ligand>
</feature>
<feature type="binding site" evidence="1">
    <location>
        <begin position="60"/>
        <end position="61"/>
    </location>
    <ligand>
        <name>substrate</name>
    </ligand>
</feature>
<feature type="binding site" evidence="1">
    <location>
        <begin position="93"/>
        <end position="94"/>
    </location>
    <ligand>
        <name>substrate</name>
    </ligand>
</feature>
<feature type="binding site" evidence="1">
    <location>
        <begin position="205"/>
        <end position="206"/>
    </location>
    <ligand>
        <name>substrate</name>
    </ligand>
</feature>
<keyword id="KW-0133">Cell shape</keyword>
<keyword id="KW-0961">Cell wall biogenesis/degradation</keyword>
<keyword id="KW-0413">Isomerase</keyword>
<keyword id="KW-0573">Peptidoglycan synthesis</keyword>
<dbReference type="EC" id="5.1.1.3" evidence="1"/>
<dbReference type="EMBL" id="FM200053">
    <property type="protein sequence ID" value="CAR61977.1"/>
    <property type="molecule type" value="Genomic_DNA"/>
</dbReference>
<dbReference type="RefSeq" id="WP_000201804.1">
    <property type="nucleotide sequence ID" value="NC_011147.1"/>
</dbReference>
<dbReference type="SMR" id="B5BJP1"/>
<dbReference type="KEGG" id="sek:SSPA3694"/>
<dbReference type="HOGENOM" id="CLU_052344_2_0_6"/>
<dbReference type="UniPathway" id="UPA00219"/>
<dbReference type="Proteomes" id="UP000001869">
    <property type="component" value="Chromosome"/>
</dbReference>
<dbReference type="GO" id="GO:0008881">
    <property type="term" value="F:glutamate racemase activity"/>
    <property type="evidence" value="ECO:0007669"/>
    <property type="project" value="UniProtKB-UniRule"/>
</dbReference>
<dbReference type="GO" id="GO:0071555">
    <property type="term" value="P:cell wall organization"/>
    <property type="evidence" value="ECO:0007669"/>
    <property type="project" value="UniProtKB-KW"/>
</dbReference>
<dbReference type="GO" id="GO:0009252">
    <property type="term" value="P:peptidoglycan biosynthetic process"/>
    <property type="evidence" value="ECO:0007669"/>
    <property type="project" value="UniProtKB-UniRule"/>
</dbReference>
<dbReference type="GO" id="GO:0008360">
    <property type="term" value="P:regulation of cell shape"/>
    <property type="evidence" value="ECO:0007669"/>
    <property type="project" value="UniProtKB-KW"/>
</dbReference>
<dbReference type="FunFam" id="3.40.50.1860:FF:000002">
    <property type="entry name" value="Glutamate racemase"/>
    <property type="match status" value="1"/>
</dbReference>
<dbReference type="Gene3D" id="3.40.50.1860">
    <property type="match status" value="2"/>
</dbReference>
<dbReference type="HAMAP" id="MF_00258">
    <property type="entry name" value="Glu_racemase"/>
    <property type="match status" value="1"/>
</dbReference>
<dbReference type="InterPro" id="IPR015942">
    <property type="entry name" value="Asp/Glu/hydantoin_racemase"/>
</dbReference>
<dbReference type="InterPro" id="IPR001920">
    <property type="entry name" value="Asp/Glu_race"/>
</dbReference>
<dbReference type="InterPro" id="IPR018187">
    <property type="entry name" value="Asp/Glu_racemase_AS_1"/>
</dbReference>
<dbReference type="InterPro" id="IPR033134">
    <property type="entry name" value="Asp/Glu_racemase_AS_2"/>
</dbReference>
<dbReference type="InterPro" id="IPR004391">
    <property type="entry name" value="Glu_race"/>
</dbReference>
<dbReference type="NCBIfam" id="TIGR00067">
    <property type="entry name" value="glut_race"/>
    <property type="match status" value="1"/>
</dbReference>
<dbReference type="NCBIfam" id="NF002034">
    <property type="entry name" value="PRK00865.1-1"/>
    <property type="match status" value="1"/>
</dbReference>
<dbReference type="PANTHER" id="PTHR21198">
    <property type="entry name" value="GLUTAMATE RACEMASE"/>
    <property type="match status" value="1"/>
</dbReference>
<dbReference type="PANTHER" id="PTHR21198:SF2">
    <property type="entry name" value="GLUTAMATE RACEMASE"/>
    <property type="match status" value="1"/>
</dbReference>
<dbReference type="Pfam" id="PF01177">
    <property type="entry name" value="Asp_Glu_race"/>
    <property type="match status" value="1"/>
</dbReference>
<dbReference type="SUPFAM" id="SSF53681">
    <property type="entry name" value="Aspartate/glutamate racemase"/>
    <property type="match status" value="2"/>
</dbReference>
<dbReference type="PROSITE" id="PS00923">
    <property type="entry name" value="ASP_GLU_RACEMASE_1"/>
    <property type="match status" value="1"/>
</dbReference>
<dbReference type="PROSITE" id="PS00924">
    <property type="entry name" value="ASP_GLU_RACEMASE_2"/>
    <property type="match status" value="1"/>
</dbReference>
<gene>
    <name evidence="1" type="primary">murI</name>
    <name type="ordered locus">SSPA3694</name>
</gene>
<evidence type="ECO:0000255" key="1">
    <source>
        <dbReference type="HAMAP-Rule" id="MF_00258"/>
    </source>
</evidence>
<comment type="function">
    <text evidence="1">Provides the (R)-glutamate required for cell wall biosynthesis.</text>
</comment>
<comment type="catalytic activity">
    <reaction evidence="1">
        <text>L-glutamate = D-glutamate</text>
        <dbReference type="Rhea" id="RHEA:12813"/>
        <dbReference type="ChEBI" id="CHEBI:29985"/>
        <dbReference type="ChEBI" id="CHEBI:29986"/>
        <dbReference type="EC" id="5.1.1.3"/>
    </reaction>
</comment>
<comment type="pathway">
    <text evidence="1">Cell wall biogenesis; peptidoglycan biosynthesis.</text>
</comment>
<comment type="similarity">
    <text evidence="1">Belongs to the aspartate/glutamate racemases family.</text>
</comment>
<proteinExistence type="inferred from homology"/>
<organism>
    <name type="scientific">Salmonella paratyphi A (strain AKU_12601)</name>
    <dbReference type="NCBI Taxonomy" id="554290"/>
    <lineage>
        <taxon>Bacteria</taxon>
        <taxon>Pseudomonadati</taxon>
        <taxon>Pseudomonadota</taxon>
        <taxon>Gammaproteobacteria</taxon>
        <taxon>Enterobacterales</taxon>
        <taxon>Enterobacteriaceae</taxon>
        <taxon>Salmonella</taxon>
    </lineage>
</organism>
<accession>B5BJP1</accession>
<reference key="1">
    <citation type="journal article" date="2009" name="BMC Genomics">
        <title>Pseudogene accumulation in the evolutionary histories of Salmonella enterica serovars Paratyphi A and Typhi.</title>
        <authorList>
            <person name="Holt K.E."/>
            <person name="Thomson N.R."/>
            <person name="Wain J."/>
            <person name="Langridge G.C."/>
            <person name="Hasan R."/>
            <person name="Bhutta Z.A."/>
            <person name="Quail M.A."/>
            <person name="Norbertczak H."/>
            <person name="Walker D."/>
            <person name="Simmonds M."/>
            <person name="White B."/>
            <person name="Bason N."/>
            <person name="Mungall K."/>
            <person name="Dougan G."/>
            <person name="Parkhill J."/>
        </authorList>
    </citation>
    <scope>NUCLEOTIDE SEQUENCE [LARGE SCALE GENOMIC DNA]</scope>
    <source>
        <strain>AKU_12601</strain>
    </source>
</reference>
<protein>
    <recommendedName>
        <fullName evidence="1">Glutamate racemase</fullName>
        <ecNumber evidence="1">5.1.1.3</ecNumber>
    </recommendedName>
</protein>